<reference key="1">
    <citation type="submission" date="2006-08" db="EMBL/GenBank/DDBJ databases">
        <authorList>
            <consortium name="NIH - Mammalian Gene Collection (MGC) project"/>
        </authorList>
    </citation>
    <scope>NUCLEOTIDE SEQUENCE [LARGE SCALE MRNA]</scope>
    <source>
        <strain>Hereford</strain>
        <tissue>Hypothalamus</tissue>
    </source>
</reference>
<comment type="function">
    <text evidence="1">Implicated in the regulation of circadian rhythms through autocrine and/or paracrine actions.</text>
</comment>
<comment type="subcellular location">
    <subcellularLocation>
        <location evidence="1">Secreted</location>
    </subcellularLocation>
</comment>
<comment type="similarity">
    <text evidence="3">Belongs to the NmU family.</text>
</comment>
<protein>
    <recommendedName>
        <fullName>Neuromedin-S</fullName>
    </recommendedName>
</protein>
<accession>Q0VBW8</accession>
<evidence type="ECO:0000250" key="1"/>
<evidence type="ECO:0000255" key="2"/>
<evidence type="ECO:0000305" key="3"/>
<organism>
    <name type="scientific">Bos taurus</name>
    <name type="common">Bovine</name>
    <dbReference type="NCBI Taxonomy" id="9913"/>
    <lineage>
        <taxon>Eukaryota</taxon>
        <taxon>Metazoa</taxon>
        <taxon>Chordata</taxon>
        <taxon>Craniata</taxon>
        <taxon>Vertebrata</taxon>
        <taxon>Euteleostomi</taxon>
        <taxon>Mammalia</taxon>
        <taxon>Eutheria</taxon>
        <taxon>Laurasiatheria</taxon>
        <taxon>Artiodactyla</taxon>
        <taxon>Ruminantia</taxon>
        <taxon>Pecora</taxon>
        <taxon>Bovidae</taxon>
        <taxon>Bovinae</taxon>
        <taxon>Bos</taxon>
    </lineage>
</organism>
<gene>
    <name type="primary">NMS</name>
</gene>
<feature type="signal peptide" evidence="2">
    <location>
        <begin position="1"/>
        <end position="25"/>
    </location>
</feature>
<feature type="propeptide" id="PRO_0000262475" evidence="1">
    <location>
        <begin position="26"/>
        <end position="64"/>
    </location>
</feature>
<feature type="propeptide" id="PRO_0000262476" evidence="1">
    <location>
        <begin position="65"/>
        <end position="100"/>
    </location>
</feature>
<feature type="propeptide" id="PRO_0000262477" evidence="1">
    <location>
        <begin position="101"/>
        <end position="103"/>
    </location>
</feature>
<feature type="peptide" id="PRO_0000262478" description="Neuromedin-S">
    <location>
        <begin position="104"/>
        <end position="136"/>
    </location>
</feature>
<feature type="propeptide" id="PRO_0000262479" evidence="1">
    <location>
        <begin position="139"/>
        <end position="145"/>
    </location>
</feature>
<feature type="modified residue" description="Asparagine amide" evidence="1">
    <location>
        <position position="136"/>
    </location>
</feature>
<sequence>MKYLAQFPSILAIYCFCLLQIPSSGFPRPLADASDGLDIVKFEQMAYWASLSRQPKDNQDIYKRFLFHYSRTQEPAHPVKTGFPPVHPLMRLAAKLADRRMKTFWRRDSRATAADFTKKDYTATLGRPFFLFRPRNGRNLDFDTW</sequence>
<proteinExistence type="evidence at transcript level"/>
<name>NMS_BOVIN</name>
<dbReference type="EMBL" id="BC120470">
    <property type="protein sequence ID" value="AAI20471.1"/>
    <property type="molecule type" value="mRNA"/>
</dbReference>
<dbReference type="RefSeq" id="NP_001070990.1">
    <property type="nucleotide sequence ID" value="NM_001077522.2"/>
</dbReference>
<dbReference type="STRING" id="9913.ENSBTAP00000045486"/>
<dbReference type="PaxDb" id="9913-ENSBTAP00000045486"/>
<dbReference type="GeneID" id="768331"/>
<dbReference type="KEGG" id="bta:768331"/>
<dbReference type="CTD" id="129521"/>
<dbReference type="eggNOG" id="ENOG502SB16">
    <property type="taxonomic scope" value="Eukaryota"/>
</dbReference>
<dbReference type="HOGENOM" id="CLU_090356_1_0_1"/>
<dbReference type="InParanoid" id="Q0VBW8"/>
<dbReference type="OrthoDB" id="9940794at2759"/>
<dbReference type="TreeFam" id="TF338319"/>
<dbReference type="Proteomes" id="UP000009136">
    <property type="component" value="Unplaced"/>
</dbReference>
<dbReference type="GO" id="GO:0005576">
    <property type="term" value="C:extracellular region"/>
    <property type="evidence" value="ECO:0007669"/>
    <property type="project" value="UniProtKB-SubCell"/>
</dbReference>
<dbReference type="GO" id="GO:0007218">
    <property type="term" value="P:neuropeptide signaling pathway"/>
    <property type="evidence" value="ECO:0007669"/>
    <property type="project" value="UniProtKB-KW"/>
</dbReference>
<dbReference type="InterPro" id="IPR018070">
    <property type="entry name" value="Neuromedin-U_amidation-site"/>
</dbReference>
<dbReference type="InterPro" id="IPR043253">
    <property type="entry name" value="NmS"/>
</dbReference>
<dbReference type="PANTHER" id="PTHR32414">
    <property type="entry name" value="NEUROMEDIN-S"/>
    <property type="match status" value="1"/>
</dbReference>
<dbReference type="PANTHER" id="PTHR32414:SF2">
    <property type="entry name" value="NEUROMEDIN-S"/>
    <property type="match status" value="1"/>
</dbReference>
<dbReference type="PROSITE" id="PS00967">
    <property type="entry name" value="NMU"/>
    <property type="match status" value="1"/>
</dbReference>
<keyword id="KW-0027">Amidation</keyword>
<keyword id="KW-0165">Cleavage on pair of basic residues</keyword>
<keyword id="KW-0527">Neuropeptide</keyword>
<keyword id="KW-1185">Reference proteome</keyword>
<keyword id="KW-0964">Secreted</keyword>
<keyword id="KW-0732">Signal</keyword>